<organism>
    <name type="scientific">Thermotoga neapolitana (strain ATCC 49049 / DSM 4359 / NBRC 107923 / NS-E)</name>
    <dbReference type="NCBI Taxonomy" id="309803"/>
    <lineage>
        <taxon>Bacteria</taxon>
        <taxon>Thermotogati</taxon>
        <taxon>Thermotogota</taxon>
        <taxon>Thermotogae</taxon>
        <taxon>Thermotogales</taxon>
        <taxon>Thermotogaceae</taxon>
        <taxon>Thermotoga</taxon>
    </lineage>
</organism>
<gene>
    <name evidence="1" type="primary">glyQ</name>
    <name type="ordered locus">CTN_0469</name>
</gene>
<comment type="catalytic activity">
    <reaction evidence="1">
        <text>tRNA(Gly) + glycine + ATP = glycyl-tRNA(Gly) + AMP + diphosphate</text>
        <dbReference type="Rhea" id="RHEA:16013"/>
        <dbReference type="Rhea" id="RHEA-COMP:9664"/>
        <dbReference type="Rhea" id="RHEA-COMP:9683"/>
        <dbReference type="ChEBI" id="CHEBI:30616"/>
        <dbReference type="ChEBI" id="CHEBI:33019"/>
        <dbReference type="ChEBI" id="CHEBI:57305"/>
        <dbReference type="ChEBI" id="CHEBI:78442"/>
        <dbReference type="ChEBI" id="CHEBI:78522"/>
        <dbReference type="ChEBI" id="CHEBI:456215"/>
        <dbReference type="EC" id="6.1.1.14"/>
    </reaction>
</comment>
<comment type="subunit">
    <text evidence="1">Tetramer of two alpha and two beta subunits.</text>
</comment>
<comment type="subcellular location">
    <subcellularLocation>
        <location evidence="1">Cytoplasm</location>
    </subcellularLocation>
</comment>
<comment type="similarity">
    <text evidence="1">Belongs to the class-II aminoacyl-tRNA synthetase family.</text>
</comment>
<keyword id="KW-0030">Aminoacyl-tRNA synthetase</keyword>
<keyword id="KW-0067">ATP-binding</keyword>
<keyword id="KW-0963">Cytoplasm</keyword>
<keyword id="KW-0436">Ligase</keyword>
<keyword id="KW-0547">Nucleotide-binding</keyword>
<keyword id="KW-0648">Protein biosynthesis</keyword>
<accession>B9K6R2</accession>
<protein>
    <recommendedName>
        <fullName evidence="1">Glycine--tRNA ligase alpha subunit</fullName>
        <ecNumber evidence="1">6.1.1.14</ecNumber>
    </recommendedName>
    <alternativeName>
        <fullName evidence="1">Glycyl-tRNA synthetase alpha subunit</fullName>
        <shortName evidence="1">GlyRS</shortName>
    </alternativeName>
</protein>
<proteinExistence type="inferred from homology"/>
<evidence type="ECO:0000255" key="1">
    <source>
        <dbReference type="HAMAP-Rule" id="MF_00254"/>
    </source>
</evidence>
<feature type="chain" id="PRO_1000125563" description="Glycine--tRNA ligase alpha subunit">
    <location>
        <begin position="1"/>
        <end position="286"/>
    </location>
</feature>
<reference key="1">
    <citation type="submission" date="2007-11" db="EMBL/GenBank/DDBJ databases">
        <title>The genome sequence of the hyperthermophilic bacterium Thermotoga neapolitana.</title>
        <authorList>
            <person name="Lim S.K."/>
            <person name="Kim J.S."/>
            <person name="Cha S.H."/>
            <person name="Park B.C."/>
            <person name="Lee D.S."/>
            <person name="Tae H.S."/>
            <person name="Kim S.-J."/>
            <person name="Kim J.J."/>
            <person name="Park K.J."/>
            <person name="Lee S.Y."/>
        </authorList>
    </citation>
    <scope>NUCLEOTIDE SEQUENCE [LARGE SCALE GENOMIC DNA]</scope>
    <source>
        <strain>ATCC 49049 / DSM 4359 / NBRC 107923 / NS-E</strain>
    </source>
</reference>
<sequence>MYLQDVIMKLNEFWASRGCLLEQPYDLEVGAGTFHPATFFGSLRKGPWKVAYVQPSRRPTDGRYGENPNRLQRYFQYQVIIKPSPENSQELYLESLEYLGVNLREHDIRFVEDNWESPTLGAWGVGWEVWLDGMEITQFTYFQQIGGISLREIPLEITYGLERIAMYLQGVDNVFEVKWNEHVKYGDVFLENEREFSFFNFEEANVELLFRHFDEFESEFYRLIEKKLYLPAYDYVLKCSHTFNLLDARGAISVSQRQTYVKRIQAMARKVARVFLEVQEHENSPA</sequence>
<dbReference type="EC" id="6.1.1.14" evidence="1"/>
<dbReference type="EMBL" id="CP000916">
    <property type="protein sequence ID" value="ACM22645.1"/>
    <property type="molecule type" value="Genomic_DNA"/>
</dbReference>
<dbReference type="RefSeq" id="WP_015918964.1">
    <property type="nucleotide sequence ID" value="NC_011978.1"/>
</dbReference>
<dbReference type="SMR" id="B9K6R2"/>
<dbReference type="STRING" id="309803.CTN_0469"/>
<dbReference type="KEGG" id="tna:CTN_0469"/>
<dbReference type="eggNOG" id="COG0752">
    <property type="taxonomic scope" value="Bacteria"/>
</dbReference>
<dbReference type="HOGENOM" id="CLU_057066_1_0_0"/>
<dbReference type="Proteomes" id="UP000000445">
    <property type="component" value="Chromosome"/>
</dbReference>
<dbReference type="GO" id="GO:0005829">
    <property type="term" value="C:cytosol"/>
    <property type="evidence" value="ECO:0007669"/>
    <property type="project" value="TreeGrafter"/>
</dbReference>
<dbReference type="GO" id="GO:0005524">
    <property type="term" value="F:ATP binding"/>
    <property type="evidence" value="ECO:0007669"/>
    <property type="project" value="UniProtKB-UniRule"/>
</dbReference>
<dbReference type="GO" id="GO:0004820">
    <property type="term" value="F:glycine-tRNA ligase activity"/>
    <property type="evidence" value="ECO:0007669"/>
    <property type="project" value="UniProtKB-UniRule"/>
</dbReference>
<dbReference type="GO" id="GO:0006426">
    <property type="term" value="P:glycyl-tRNA aminoacylation"/>
    <property type="evidence" value="ECO:0007669"/>
    <property type="project" value="UniProtKB-UniRule"/>
</dbReference>
<dbReference type="CDD" id="cd00733">
    <property type="entry name" value="GlyRS_alpha_core"/>
    <property type="match status" value="1"/>
</dbReference>
<dbReference type="FunFam" id="3.30.930.10:FF:000006">
    <property type="entry name" value="Glycine--tRNA ligase alpha subunit"/>
    <property type="match status" value="1"/>
</dbReference>
<dbReference type="Gene3D" id="3.30.930.10">
    <property type="entry name" value="Bira Bifunctional Protein, Domain 2"/>
    <property type="match status" value="1"/>
</dbReference>
<dbReference type="Gene3D" id="1.20.58.180">
    <property type="entry name" value="Class II aaRS and biotin synthetases, domain 2"/>
    <property type="match status" value="1"/>
</dbReference>
<dbReference type="HAMAP" id="MF_00254">
    <property type="entry name" value="Gly_tRNA_synth_alpha"/>
    <property type="match status" value="1"/>
</dbReference>
<dbReference type="InterPro" id="IPR045864">
    <property type="entry name" value="aa-tRNA-synth_II/BPL/LPL"/>
</dbReference>
<dbReference type="InterPro" id="IPR006194">
    <property type="entry name" value="Gly-tRNA-synth_heterodimer"/>
</dbReference>
<dbReference type="InterPro" id="IPR002310">
    <property type="entry name" value="Gly-tRNA_ligase_asu"/>
</dbReference>
<dbReference type="NCBIfam" id="TIGR00388">
    <property type="entry name" value="glyQ"/>
    <property type="match status" value="1"/>
</dbReference>
<dbReference type="NCBIfam" id="NF006827">
    <property type="entry name" value="PRK09348.1"/>
    <property type="match status" value="1"/>
</dbReference>
<dbReference type="PANTHER" id="PTHR30075:SF2">
    <property type="entry name" value="GLYCINE--TRNA LIGASE, CHLOROPLASTIC_MITOCHONDRIAL 2"/>
    <property type="match status" value="1"/>
</dbReference>
<dbReference type="PANTHER" id="PTHR30075">
    <property type="entry name" value="GLYCYL-TRNA SYNTHETASE"/>
    <property type="match status" value="1"/>
</dbReference>
<dbReference type="Pfam" id="PF02091">
    <property type="entry name" value="tRNA-synt_2e"/>
    <property type="match status" value="1"/>
</dbReference>
<dbReference type="PRINTS" id="PR01044">
    <property type="entry name" value="TRNASYNTHGA"/>
</dbReference>
<dbReference type="SUPFAM" id="SSF55681">
    <property type="entry name" value="Class II aaRS and biotin synthetases"/>
    <property type="match status" value="1"/>
</dbReference>
<dbReference type="PROSITE" id="PS50861">
    <property type="entry name" value="AA_TRNA_LIGASE_II_GLYAB"/>
    <property type="match status" value="1"/>
</dbReference>
<name>SYGA_THENN</name>